<dbReference type="EC" id="3.4.13.21" evidence="1"/>
<dbReference type="EMBL" id="CP001138">
    <property type="protein sequence ID" value="ACH52715.1"/>
    <property type="molecule type" value="Genomic_DNA"/>
</dbReference>
<dbReference type="RefSeq" id="WP_000421776.1">
    <property type="nucleotide sequence ID" value="NC_011149.1"/>
</dbReference>
<dbReference type="SMR" id="B5F1K4"/>
<dbReference type="MEROPS" id="S51.001"/>
<dbReference type="KEGG" id="sea:SeAg_B4442"/>
<dbReference type="HOGENOM" id="CLU_071689_0_0_6"/>
<dbReference type="Proteomes" id="UP000008819">
    <property type="component" value="Chromosome"/>
</dbReference>
<dbReference type="GO" id="GO:0005737">
    <property type="term" value="C:cytoplasm"/>
    <property type="evidence" value="ECO:0007669"/>
    <property type="project" value="UniProtKB-SubCell"/>
</dbReference>
<dbReference type="GO" id="GO:0016805">
    <property type="term" value="F:dipeptidase activity"/>
    <property type="evidence" value="ECO:0007669"/>
    <property type="project" value="UniProtKB-UniRule"/>
</dbReference>
<dbReference type="GO" id="GO:0008236">
    <property type="term" value="F:serine-type peptidase activity"/>
    <property type="evidence" value="ECO:0007669"/>
    <property type="project" value="UniProtKB-KW"/>
</dbReference>
<dbReference type="GO" id="GO:0006508">
    <property type="term" value="P:proteolysis"/>
    <property type="evidence" value="ECO:0007669"/>
    <property type="project" value="UniProtKB-UniRule"/>
</dbReference>
<dbReference type="CDD" id="cd03146">
    <property type="entry name" value="GAT1_Peptidase_E"/>
    <property type="match status" value="1"/>
</dbReference>
<dbReference type="FunFam" id="3.40.50.880:FF:000007">
    <property type="entry name" value="Peptidase E"/>
    <property type="match status" value="1"/>
</dbReference>
<dbReference type="Gene3D" id="3.40.50.880">
    <property type="match status" value="1"/>
</dbReference>
<dbReference type="HAMAP" id="MF_00510">
    <property type="entry name" value="Peptidase_E"/>
    <property type="match status" value="1"/>
</dbReference>
<dbReference type="InterPro" id="IPR029062">
    <property type="entry name" value="Class_I_gatase-like"/>
</dbReference>
<dbReference type="InterPro" id="IPR005320">
    <property type="entry name" value="Peptidase_S51"/>
</dbReference>
<dbReference type="InterPro" id="IPR023172">
    <property type="entry name" value="Peptidase_S51_dipeptidase-E"/>
</dbReference>
<dbReference type="NCBIfam" id="NF003642">
    <property type="entry name" value="PRK05282.1"/>
    <property type="match status" value="1"/>
</dbReference>
<dbReference type="PANTHER" id="PTHR20842:SF0">
    <property type="entry name" value="ALPHA-ASPARTYL DIPEPTIDASE"/>
    <property type="match status" value="1"/>
</dbReference>
<dbReference type="PANTHER" id="PTHR20842">
    <property type="entry name" value="PROTEASE S51 ALPHA-ASPARTYL DIPEPTIDASE"/>
    <property type="match status" value="1"/>
</dbReference>
<dbReference type="Pfam" id="PF03575">
    <property type="entry name" value="Peptidase_S51"/>
    <property type="match status" value="1"/>
</dbReference>
<dbReference type="SUPFAM" id="SSF52317">
    <property type="entry name" value="Class I glutamine amidotransferase-like"/>
    <property type="match status" value="1"/>
</dbReference>
<reference key="1">
    <citation type="journal article" date="2011" name="J. Bacteriol.">
        <title>Comparative genomics of 28 Salmonella enterica isolates: evidence for CRISPR-mediated adaptive sublineage evolution.</title>
        <authorList>
            <person name="Fricke W.F."/>
            <person name="Mammel M.K."/>
            <person name="McDermott P.F."/>
            <person name="Tartera C."/>
            <person name="White D.G."/>
            <person name="Leclerc J.E."/>
            <person name="Ravel J."/>
            <person name="Cebula T.A."/>
        </authorList>
    </citation>
    <scope>NUCLEOTIDE SEQUENCE [LARGE SCALE GENOMIC DNA]</scope>
    <source>
        <strain>SL483</strain>
    </source>
</reference>
<proteinExistence type="inferred from homology"/>
<organism>
    <name type="scientific">Salmonella agona (strain SL483)</name>
    <dbReference type="NCBI Taxonomy" id="454166"/>
    <lineage>
        <taxon>Bacteria</taxon>
        <taxon>Pseudomonadati</taxon>
        <taxon>Pseudomonadota</taxon>
        <taxon>Gammaproteobacteria</taxon>
        <taxon>Enterobacterales</taxon>
        <taxon>Enterobacteriaceae</taxon>
        <taxon>Salmonella</taxon>
    </lineage>
</organism>
<evidence type="ECO:0000255" key="1">
    <source>
        <dbReference type="HAMAP-Rule" id="MF_00510"/>
    </source>
</evidence>
<accession>B5F1K4</accession>
<gene>
    <name evidence="1" type="primary">pepE</name>
    <name type="ordered locus">SeAg_B4442</name>
</gene>
<sequence>MELLLLSNSTLPGKAWLEHALPLIANQLNGRRSAVFIPFAGVTQTWDEYTDKTAEVLAPLGINVTGIHRVADPLAAIEKAEIIIVGGGNTFQLLKESRERGLLAPMADRVKRGALYIGWSAGANLACPTIRTTNDMPIVDPNGFDALDLFPLQINPHFTNALPEGHKGETREQRIRELLVVAPELTVIGLPEGNWIQVSNGQAVLGGPNTTWVFKAGEEAVALEAGHRF</sequence>
<protein>
    <recommendedName>
        <fullName evidence="1">Peptidase E</fullName>
        <ecNumber evidence="1">3.4.13.21</ecNumber>
    </recommendedName>
    <alternativeName>
        <fullName evidence="1">Alpha-aspartyl dipeptidase</fullName>
    </alternativeName>
    <alternativeName>
        <fullName evidence="1">Asp-specific dipeptidase</fullName>
    </alternativeName>
    <alternativeName>
        <fullName evidence="1">Dipeptidase E</fullName>
    </alternativeName>
</protein>
<name>PEPE_SALA4</name>
<feature type="chain" id="PRO_1000127248" description="Peptidase E">
    <location>
        <begin position="1"/>
        <end position="229"/>
    </location>
</feature>
<feature type="active site" description="Charge relay system" evidence="1">
    <location>
        <position position="120"/>
    </location>
</feature>
<feature type="active site" description="Charge relay system" evidence="1">
    <location>
        <position position="135"/>
    </location>
</feature>
<feature type="active site" description="Charge relay system" evidence="1">
    <location>
        <position position="157"/>
    </location>
</feature>
<comment type="function">
    <text evidence="1">Hydrolyzes dipeptides containing N-terminal aspartate residues. May play a role in allowing the cell to use peptide aspartate to spare carbon otherwise required for the synthesis of the aspartate family of amino acids.</text>
</comment>
<comment type="catalytic activity">
    <reaction evidence="1">
        <text>Dipeptidase E catalyzes the hydrolysis of dipeptides Asp-|-Xaa. It does not act on peptides with N-terminal Glu, Asn or Gln, nor does it cleave isoaspartyl peptides.</text>
        <dbReference type="EC" id="3.4.13.21"/>
    </reaction>
</comment>
<comment type="subcellular location">
    <subcellularLocation>
        <location evidence="1">Cytoplasm</location>
    </subcellularLocation>
</comment>
<comment type="similarity">
    <text evidence="1">Belongs to the peptidase S51 family.</text>
</comment>
<keyword id="KW-0963">Cytoplasm</keyword>
<keyword id="KW-0224">Dipeptidase</keyword>
<keyword id="KW-0378">Hydrolase</keyword>
<keyword id="KW-0645">Protease</keyword>
<keyword id="KW-0720">Serine protease</keyword>